<keyword id="KW-0004">4Fe-4S</keyword>
<keyword id="KW-0408">Iron</keyword>
<keyword id="KW-0411">Iron-sulfur</keyword>
<keyword id="KW-0456">Lyase</keyword>
<keyword id="KW-0479">Metal-binding</keyword>
<keyword id="KW-0949">S-adenosyl-L-methionine</keyword>
<keyword id="KW-0784">Thiamine biosynthesis</keyword>
<keyword id="KW-0862">Zinc</keyword>
<reference key="1">
    <citation type="journal article" date="2008" name="J. Bacteriol.">
        <title>The pangenome structure of Escherichia coli: comparative genomic analysis of E. coli commensal and pathogenic isolates.</title>
        <authorList>
            <person name="Rasko D.A."/>
            <person name="Rosovitz M.J."/>
            <person name="Myers G.S.A."/>
            <person name="Mongodin E.F."/>
            <person name="Fricke W.F."/>
            <person name="Gajer P."/>
            <person name="Crabtree J."/>
            <person name="Sebaihia M."/>
            <person name="Thomson N.R."/>
            <person name="Chaudhuri R."/>
            <person name="Henderson I.R."/>
            <person name="Sperandio V."/>
            <person name="Ravel J."/>
        </authorList>
    </citation>
    <scope>NUCLEOTIDE SEQUENCE [LARGE SCALE GENOMIC DNA]</scope>
    <source>
        <strain>HS</strain>
    </source>
</reference>
<organism>
    <name type="scientific">Escherichia coli O9:H4 (strain HS)</name>
    <dbReference type="NCBI Taxonomy" id="331112"/>
    <lineage>
        <taxon>Bacteria</taxon>
        <taxon>Pseudomonadati</taxon>
        <taxon>Pseudomonadota</taxon>
        <taxon>Gammaproteobacteria</taxon>
        <taxon>Enterobacterales</taxon>
        <taxon>Enterobacteriaceae</taxon>
        <taxon>Escherichia</taxon>
    </lineage>
</organism>
<name>THIC_ECOHS</name>
<evidence type="ECO:0000255" key="1">
    <source>
        <dbReference type="HAMAP-Rule" id="MF_00089"/>
    </source>
</evidence>
<comment type="function">
    <text evidence="1">Catalyzes the synthesis of the hydroxymethylpyrimidine phosphate (HMP-P) moiety of thiamine from aminoimidazole ribotide (AIR) in a radical S-adenosyl-L-methionine (SAM)-dependent reaction.</text>
</comment>
<comment type="catalytic activity">
    <reaction evidence="1">
        <text>5-amino-1-(5-phospho-beta-D-ribosyl)imidazole + S-adenosyl-L-methionine = 4-amino-2-methyl-5-(phosphooxymethyl)pyrimidine + CO + 5'-deoxyadenosine + formate + L-methionine + 3 H(+)</text>
        <dbReference type="Rhea" id="RHEA:24840"/>
        <dbReference type="ChEBI" id="CHEBI:15378"/>
        <dbReference type="ChEBI" id="CHEBI:15740"/>
        <dbReference type="ChEBI" id="CHEBI:17245"/>
        <dbReference type="ChEBI" id="CHEBI:17319"/>
        <dbReference type="ChEBI" id="CHEBI:57844"/>
        <dbReference type="ChEBI" id="CHEBI:58354"/>
        <dbReference type="ChEBI" id="CHEBI:59789"/>
        <dbReference type="ChEBI" id="CHEBI:137981"/>
        <dbReference type="EC" id="4.1.99.17"/>
    </reaction>
</comment>
<comment type="cofactor">
    <cofactor evidence="1">
        <name>[4Fe-4S] cluster</name>
        <dbReference type="ChEBI" id="CHEBI:49883"/>
    </cofactor>
    <text evidence="1">Binds 1 [4Fe-4S] cluster per subunit. The cluster is coordinated with 3 cysteines and an exchangeable S-adenosyl-L-methionine.</text>
</comment>
<comment type="pathway">
    <text evidence="1">Cofactor biosynthesis; thiamine diphosphate biosynthesis.</text>
</comment>
<comment type="subunit">
    <text evidence="1">Homodimer.</text>
</comment>
<comment type="similarity">
    <text evidence="1">Belongs to the ThiC family.</text>
</comment>
<sequence length="631" mass="70850">MSATKLTRREQRARAQHFIDTLEGTAFPNSKRIYITGTHPGVRVPMREIQLSPTLIGGSKEQPQYEENEAIPVYDTSGPYGDPQIAINVQQGLAKLRQPWIDARGDTEELTVRSSDYTKARLADDGLDELRFSGVLTPKRAKAGRRVTQLHYARQGIITPEMEFIAIRENMGRERIRSEVLRHQHPGMSFGAHLPENITAEFVRDEVAAGRAIIPANINHPESEPMIIGRNFLVKVNANIGNSAVTSSIEEEVEKLVWSTRWGADTVMDLSTGRYIHETREWILRNSPVPIGTVPIYQALEKVNGIAEDLTWEAFRDTLLEQAEQGVDYFTIHAGVLLRYVPMTAKRLTGIVSRGGSIMAKWCLSHHQENFLYQHFREICEICAAYDVSLSLGDGLRPGSIQDANDEAQFAELHTLGELTKIAWEYDVQVMIEGPGHVPMQMIRRNMTEELEHCHEAPFYTLGPLTTDIAPGYDHFTSGIGAAMIGWFGCAMLCYVTPKEHLGLPNKEDVKQGLITYKIAAHAADLAKGHPGAQIRDNAMSKARFEFRWEDQFNLALDPFTARAYHDETLPQESGKVAHFCSMCGPKFCSMKISQEVRDYAATQTIEMGMADMSENFRARGGEIYLRKEEA</sequence>
<accession>A8A794</accession>
<feature type="chain" id="PRO_1000057593" description="Phosphomethylpyrimidine synthase">
    <location>
        <begin position="1"/>
        <end position="631"/>
    </location>
</feature>
<feature type="binding site" evidence="1">
    <location>
        <position position="239"/>
    </location>
    <ligand>
        <name>substrate</name>
    </ligand>
</feature>
<feature type="binding site" evidence="1">
    <location>
        <position position="268"/>
    </location>
    <ligand>
        <name>substrate</name>
    </ligand>
</feature>
<feature type="binding site" evidence="1">
    <location>
        <position position="297"/>
    </location>
    <ligand>
        <name>substrate</name>
    </ligand>
</feature>
<feature type="binding site" evidence="1">
    <location>
        <position position="333"/>
    </location>
    <ligand>
        <name>substrate</name>
    </ligand>
</feature>
<feature type="binding site" evidence="1">
    <location>
        <begin position="353"/>
        <end position="355"/>
    </location>
    <ligand>
        <name>substrate</name>
    </ligand>
</feature>
<feature type="binding site" evidence="1">
    <location>
        <begin position="394"/>
        <end position="397"/>
    </location>
    <ligand>
        <name>substrate</name>
    </ligand>
</feature>
<feature type="binding site" evidence="1">
    <location>
        <position position="433"/>
    </location>
    <ligand>
        <name>substrate</name>
    </ligand>
</feature>
<feature type="binding site" evidence="1">
    <location>
        <position position="437"/>
    </location>
    <ligand>
        <name>Zn(2+)</name>
        <dbReference type="ChEBI" id="CHEBI:29105"/>
    </ligand>
</feature>
<feature type="binding site" evidence="1">
    <location>
        <position position="460"/>
    </location>
    <ligand>
        <name>substrate</name>
    </ligand>
</feature>
<feature type="binding site" evidence="1">
    <location>
        <position position="501"/>
    </location>
    <ligand>
        <name>Zn(2+)</name>
        <dbReference type="ChEBI" id="CHEBI:29105"/>
    </ligand>
</feature>
<feature type="binding site" evidence="1">
    <location>
        <position position="581"/>
    </location>
    <ligand>
        <name>[4Fe-4S] cluster</name>
        <dbReference type="ChEBI" id="CHEBI:49883"/>
        <note>4Fe-4S-S-AdoMet</note>
    </ligand>
</feature>
<feature type="binding site" evidence="1">
    <location>
        <position position="584"/>
    </location>
    <ligand>
        <name>[4Fe-4S] cluster</name>
        <dbReference type="ChEBI" id="CHEBI:49883"/>
        <note>4Fe-4S-S-AdoMet</note>
    </ligand>
</feature>
<feature type="binding site" evidence="1">
    <location>
        <position position="589"/>
    </location>
    <ligand>
        <name>[4Fe-4S] cluster</name>
        <dbReference type="ChEBI" id="CHEBI:49883"/>
        <note>4Fe-4S-S-AdoMet</note>
    </ligand>
</feature>
<protein>
    <recommendedName>
        <fullName evidence="1">Phosphomethylpyrimidine synthase</fullName>
        <ecNumber evidence="1">4.1.99.17</ecNumber>
    </recommendedName>
    <alternativeName>
        <fullName evidence="1">Hydroxymethylpyrimidine phosphate synthase</fullName>
        <shortName evidence="1">HMP-P synthase</shortName>
        <shortName evidence="1">HMP-phosphate synthase</shortName>
        <shortName evidence="1">HMPP synthase</shortName>
    </alternativeName>
    <alternativeName>
        <fullName evidence="1">Thiamine biosynthesis protein ThiC</fullName>
    </alternativeName>
</protein>
<gene>
    <name evidence="1" type="primary">thiC</name>
    <name type="ordered locus">EcHS_A4228</name>
</gene>
<proteinExistence type="inferred from homology"/>
<dbReference type="EC" id="4.1.99.17" evidence="1"/>
<dbReference type="EMBL" id="CP000802">
    <property type="protein sequence ID" value="ABV08398.1"/>
    <property type="molecule type" value="Genomic_DNA"/>
</dbReference>
<dbReference type="RefSeq" id="WP_001276926.1">
    <property type="nucleotide sequence ID" value="NC_009800.1"/>
</dbReference>
<dbReference type="SMR" id="A8A794"/>
<dbReference type="GeneID" id="75205512"/>
<dbReference type="KEGG" id="ecx:EcHS_A4228"/>
<dbReference type="HOGENOM" id="CLU_013181_2_1_6"/>
<dbReference type="UniPathway" id="UPA00060"/>
<dbReference type="GO" id="GO:0005829">
    <property type="term" value="C:cytosol"/>
    <property type="evidence" value="ECO:0007669"/>
    <property type="project" value="TreeGrafter"/>
</dbReference>
<dbReference type="GO" id="GO:0051539">
    <property type="term" value="F:4 iron, 4 sulfur cluster binding"/>
    <property type="evidence" value="ECO:0007669"/>
    <property type="project" value="UniProtKB-KW"/>
</dbReference>
<dbReference type="GO" id="GO:0016830">
    <property type="term" value="F:carbon-carbon lyase activity"/>
    <property type="evidence" value="ECO:0007669"/>
    <property type="project" value="InterPro"/>
</dbReference>
<dbReference type="GO" id="GO:0008270">
    <property type="term" value="F:zinc ion binding"/>
    <property type="evidence" value="ECO:0007669"/>
    <property type="project" value="UniProtKB-UniRule"/>
</dbReference>
<dbReference type="GO" id="GO:0009228">
    <property type="term" value="P:thiamine biosynthetic process"/>
    <property type="evidence" value="ECO:0007669"/>
    <property type="project" value="UniProtKB-KW"/>
</dbReference>
<dbReference type="GO" id="GO:0009229">
    <property type="term" value="P:thiamine diphosphate biosynthetic process"/>
    <property type="evidence" value="ECO:0007669"/>
    <property type="project" value="UniProtKB-UniRule"/>
</dbReference>
<dbReference type="FunFam" id="3.20.20.540:FF:000001">
    <property type="entry name" value="Phosphomethylpyrimidine synthase"/>
    <property type="match status" value="1"/>
</dbReference>
<dbReference type="Gene3D" id="6.10.250.620">
    <property type="match status" value="1"/>
</dbReference>
<dbReference type="Gene3D" id="3.20.20.540">
    <property type="entry name" value="Radical SAM ThiC family, central domain"/>
    <property type="match status" value="1"/>
</dbReference>
<dbReference type="HAMAP" id="MF_00089">
    <property type="entry name" value="ThiC"/>
    <property type="match status" value="1"/>
</dbReference>
<dbReference type="InterPro" id="IPR037509">
    <property type="entry name" value="ThiC"/>
</dbReference>
<dbReference type="InterPro" id="IPR025747">
    <property type="entry name" value="ThiC-associated_dom"/>
</dbReference>
<dbReference type="InterPro" id="IPR038521">
    <property type="entry name" value="ThiC/Bza_core_dom"/>
</dbReference>
<dbReference type="InterPro" id="IPR002817">
    <property type="entry name" value="ThiC/BzaA/B"/>
</dbReference>
<dbReference type="NCBIfam" id="NF006763">
    <property type="entry name" value="PRK09284.1"/>
    <property type="match status" value="1"/>
</dbReference>
<dbReference type="NCBIfam" id="NF009895">
    <property type="entry name" value="PRK13352.1"/>
    <property type="match status" value="1"/>
</dbReference>
<dbReference type="NCBIfam" id="TIGR00190">
    <property type="entry name" value="thiC"/>
    <property type="match status" value="1"/>
</dbReference>
<dbReference type="PANTHER" id="PTHR30557:SF1">
    <property type="entry name" value="PHOSPHOMETHYLPYRIMIDINE SYNTHASE, CHLOROPLASTIC"/>
    <property type="match status" value="1"/>
</dbReference>
<dbReference type="PANTHER" id="PTHR30557">
    <property type="entry name" value="THIAMINE BIOSYNTHESIS PROTEIN THIC"/>
    <property type="match status" value="1"/>
</dbReference>
<dbReference type="Pfam" id="PF13667">
    <property type="entry name" value="ThiC-associated"/>
    <property type="match status" value="1"/>
</dbReference>
<dbReference type="Pfam" id="PF01964">
    <property type="entry name" value="ThiC_Rad_SAM"/>
    <property type="match status" value="1"/>
</dbReference>
<dbReference type="SFLD" id="SFLDF00407">
    <property type="entry name" value="phosphomethylpyrimidine_syntha"/>
    <property type="match status" value="1"/>
</dbReference>
<dbReference type="SFLD" id="SFLDG01114">
    <property type="entry name" value="phosphomethylpyrimidine_syntha"/>
    <property type="match status" value="1"/>
</dbReference>
<dbReference type="SFLD" id="SFLDS00113">
    <property type="entry name" value="Radical_SAM_Phosphomethylpyrim"/>
    <property type="match status" value="1"/>
</dbReference>